<reference key="1">
    <citation type="submission" date="2008-04" db="EMBL/GenBank/DDBJ databases">
        <title>Complete sequence of chromosome 1 of Burkholderia ambifaria MC40-6.</title>
        <authorList>
            <person name="Copeland A."/>
            <person name="Lucas S."/>
            <person name="Lapidus A."/>
            <person name="Glavina del Rio T."/>
            <person name="Dalin E."/>
            <person name="Tice H."/>
            <person name="Pitluck S."/>
            <person name="Chain P."/>
            <person name="Malfatti S."/>
            <person name="Shin M."/>
            <person name="Vergez L."/>
            <person name="Lang D."/>
            <person name="Schmutz J."/>
            <person name="Larimer F."/>
            <person name="Land M."/>
            <person name="Hauser L."/>
            <person name="Kyrpides N."/>
            <person name="Lykidis A."/>
            <person name="Ramette A."/>
            <person name="Konstantinidis K."/>
            <person name="Tiedje J."/>
            <person name="Richardson P."/>
        </authorList>
    </citation>
    <scope>NUCLEOTIDE SEQUENCE [LARGE SCALE GENOMIC DNA]</scope>
    <source>
        <strain>MC40-6</strain>
    </source>
</reference>
<protein>
    <recommendedName>
        <fullName evidence="1">Biotin synthase</fullName>
        <ecNumber evidence="1">2.8.1.6</ecNumber>
    </recommendedName>
</protein>
<sequence>MTQVQTAAVQPDAIPVAAPAPQRWRVADVVALFELPFNDLMFRAQQVHREHFDANAVQLSTLLSIKTGGCEEDCGYCSQSSHHDTGLKAEKLMDVDAVLDAARAAKANGASRFCMGAAWRNPKERHMPALTEMVRGVKELGLETCMTLGMLEDEQAQELANAGLDYYNHNLDTSPEFYGQVISTRTYQDRLDTLDRVRDAGINVCCGGIIGMGESRRERAGLISQLANLNPYPESVPINNLVAIEGTPLEGTAPLDPFEFVRTIAVARITMPKAVVRLSAGREQLDDAMQAMCFLAGANSMFYGDQLLTTSNPQTQRDRALFERLGIRASDADAMQANA</sequence>
<keyword id="KW-0001">2Fe-2S</keyword>
<keyword id="KW-0004">4Fe-4S</keyword>
<keyword id="KW-0093">Biotin biosynthesis</keyword>
<keyword id="KW-0408">Iron</keyword>
<keyword id="KW-0411">Iron-sulfur</keyword>
<keyword id="KW-0479">Metal-binding</keyword>
<keyword id="KW-0949">S-adenosyl-L-methionine</keyword>
<keyword id="KW-0808">Transferase</keyword>
<comment type="function">
    <text evidence="1">Catalyzes the conversion of dethiobiotin (DTB) to biotin by the insertion of a sulfur atom into dethiobiotin via a radical-based mechanism.</text>
</comment>
<comment type="catalytic activity">
    <reaction evidence="1">
        <text>(4R,5S)-dethiobiotin + (sulfur carrier)-SH + 2 reduced [2Fe-2S]-[ferredoxin] + 2 S-adenosyl-L-methionine = (sulfur carrier)-H + biotin + 2 5'-deoxyadenosine + 2 L-methionine + 2 oxidized [2Fe-2S]-[ferredoxin]</text>
        <dbReference type="Rhea" id="RHEA:22060"/>
        <dbReference type="Rhea" id="RHEA-COMP:10000"/>
        <dbReference type="Rhea" id="RHEA-COMP:10001"/>
        <dbReference type="Rhea" id="RHEA-COMP:14737"/>
        <dbReference type="Rhea" id="RHEA-COMP:14739"/>
        <dbReference type="ChEBI" id="CHEBI:17319"/>
        <dbReference type="ChEBI" id="CHEBI:29917"/>
        <dbReference type="ChEBI" id="CHEBI:33737"/>
        <dbReference type="ChEBI" id="CHEBI:33738"/>
        <dbReference type="ChEBI" id="CHEBI:57586"/>
        <dbReference type="ChEBI" id="CHEBI:57844"/>
        <dbReference type="ChEBI" id="CHEBI:59789"/>
        <dbReference type="ChEBI" id="CHEBI:64428"/>
        <dbReference type="ChEBI" id="CHEBI:149473"/>
        <dbReference type="EC" id="2.8.1.6"/>
    </reaction>
</comment>
<comment type="cofactor">
    <cofactor evidence="1">
        <name>[4Fe-4S] cluster</name>
        <dbReference type="ChEBI" id="CHEBI:49883"/>
    </cofactor>
    <text evidence="1">Binds 1 [4Fe-4S] cluster. The cluster is coordinated with 3 cysteines and an exchangeable S-adenosyl-L-methionine.</text>
</comment>
<comment type="cofactor">
    <cofactor evidence="1">
        <name>[2Fe-2S] cluster</name>
        <dbReference type="ChEBI" id="CHEBI:190135"/>
    </cofactor>
    <text evidence="1">Binds 1 [2Fe-2S] cluster. The cluster is coordinated with 3 cysteines and 1 arginine.</text>
</comment>
<comment type="pathway">
    <text evidence="1">Cofactor biosynthesis; biotin biosynthesis; biotin from 7,8-diaminononanoate: step 2/2.</text>
</comment>
<comment type="subunit">
    <text evidence="1">Homodimer.</text>
</comment>
<comment type="similarity">
    <text evidence="1">Belongs to the radical SAM superfamily. Biotin synthase family.</text>
</comment>
<organism>
    <name type="scientific">Burkholderia ambifaria (strain MC40-6)</name>
    <dbReference type="NCBI Taxonomy" id="398577"/>
    <lineage>
        <taxon>Bacteria</taxon>
        <taxon>Pseudomonadati</taxon>
        <taxon>Pseudomonadota</taxon>
        <taxon>Betaproteobacteria</taxon>
        <taxon>Burkholderiales</taxon>
        <taxon>Burkholderiaceae</taxon>
        <taxon>Burkholderia</taxon>
        <taxon>Burkholderia cepacia complex</taxon>
    </lineage>
</organism>
<accession>B1YNS2</accession>
<evidence type="ECO:0000255" key="1">
    <source>
        <dbReference type="HAMAP-Rule" id="MF_01694"/>
    </source>
</evidence>
<evidence type="ECO:0000255" key="2">
    <source>
        <dbReference type="PROSITE-ProRule" id="PRU01266"/>
    </source>
</evidence>
<dbReference type="EC" id="2.8.1.6" evidence="1"/>
<dbReference type="EMBL" id="CP001025">
    <property type="protein sequence ID" value="ACB65322.1"/>
    <property type="molecule type" value="Genomic_DNA"/>
</dbReference>
<dbReference type="RefSeq" id="WP_012364832.1">
    <property type="nucleotide sequence ID" value="NC_010551.1"/>
</dbReference>
<dbReference type="SMR" id="B1YNS2"/>
<dbReference type="KEGG" id="bac:BamMC406_2846"/>
<dbReference type="HOGENOM" id="CLU_033172_1_2_4"/>
<dbReference type="OrthoDB" id="9786826at2"/>
<dbReference type="UniPathway" id="UPA00078">
    <property type="reaction ID" value="UER00162"/>
</dbReference>
<dbReference type="Proteomes" id="UP000001680">
    <property type="component" value="Chromosome 1"/>
</dbReference>
<dbReference type="GO" id="GO:0051537">
    <property type="term" value="F:2 iron, 2 sulfur cluster binding"/>
    <property type="evidence" value="ECO:0007669"/>
    <property type="project" value="UniProtKB-KW"/>
</dbReference>
<dbReference type="GO" id="GO:0051539">
    <property type="term" value="F:4 iron, 4 sulfur cluster binding"/>
    <property type="evidence" value="ECO:0007669"/>
    <property type="project" value="UniProtKB-KW"/>
</dbReference>
<dbReference type="GO" id="GO:0004076">
    <property type="term" value="F:biotin synthase activity"/>
    <property type="evidence" value="ECO:0007669"/>
    <property type="project" value="UniProtKB-UniRule"/>
</dbReference>
<dbReference type="GO" id="GO:0005506">
    <property type="term" value="F:iron ion binding"/>
    <property type="evidence" value="ECO:0007669"/>
    <property type="project" value="UniProtKB-UniRule"/>
</dbReference>
<dbReference type="GO" id="GO:0009102">
    <property type="term" value="P:biotin biosynthetic process"/>
    <property type="evidence" value="ECO:0007669"/>
    <property type="project" value="UniProtKB-UniRule"/>
</dbReference>
<dbReference type="CDD" id="cd01335">
    <property type="entry name" value="Radical_SAM"/>
    <property type="match status" value="1"/>
</dbReference>
<dbReference type="FunFam" id="3.20.20.70:FF:000011">
    <property type="entry name" value="Biotin synthase"/>
    <property type="match status" value="1"/>
</dbReference>
<dbReference type="Gene3D" id="3.20.20.70">
    <property type="entry name" value="Aldolase class I"/>
    <property type="match status" value="1"/>
</dbReference>
<dbReference type="HAMAP" id="MF_01694">
    <property type="entry name" value="BioB"/>
    <property type="match status" value="1"/>
</dbReference>
<dbReference type="InterPro" id="IPR013785">
    <property type="entry name" value="Aldolase_TIM"/>
</dbReference>
<dbReference type="InterPro" id="IPR010722">
    <property type="entry name" value="BATS_dom"/>
</dbReference>
<dbReference type="InterPro" id="IPR002684">
    <property type="entry name" value="Biotin_synth/BioAB"/>
</dbReference>
<dbReference type="InterPro" id="IPR024177">
    <property type="entry name" value="Biotin_synthase"/>
</dbReference>
<dbReference type="InterPro" id="IPR006638">
    <property type="entry name" value="Elp3/MiaA/NifB-like_rSAM"/>
</dbReference>
<dbReference type="InterPro" id="IPR007197">
    <property type="entry name" value="rSAM"/>
</dbReference>
<dbReference type="NCBIfam" id="TIGR00433">
    <property type="entry name" value="bioB"/>
    <property type="match status" value="1"/>
</dbReference>
<dbReference type="PANTHER" id="PTHR22976">
    <property type="entry name" value="BIOTIN SYNTHASE"/>
    <property type="match status" value="1"/>
</dbReference>
<dbReference type="PANTHER" id="PTHR22976:SF2">
    <property type="entry name" value="BIOTIN SYNTHASE, MITOCHONDRIAL"/>
    <property type="match status" value="1"/>
</dbReference>
<dbReference type="Pfam" id="PF06968">
    <property type="entry name" value="BATS"/>
    <property type="match status" value="1"/>
</dbReference>
<dbReference type="Pfam" id="PF04055">
    <property type="entry name" value="Radical_SAM"/>
    <property type="match status" value="1"/>
</dbReference>
<dbReference type="PIRSF" id="PIRSF001619">
    <property type="entry name" value="Biotin_synth"/>
    <property type="match status" value="1"/>
</dbReference>
<dbReference type="SFLD" id="SFLDF00272">
    <property type="entry name" value="biotin_synthase"/>
    <property type="match status" value="1"/>
</dbReference>
<dbReference type="SFLD" id="SFLDS00029">
    <property type="entry name" value="Radical_SAM"/>
    <property type="match status" value="1"/>
</dbReference>
<dbReference type="SMART" id="SM00876">
    <property type="entry name" value="BATS"/>
    <property type="match status" value="1"/>
</dbReference>
<dbReference type="SMART" id="SM00729">
    <property type="entry name" value="Elp3"/>
    <property type="match status" value="1"/>
</dbReference>
<dbReference type="SUPFAM" id="SSF102114">
    <property type="entry name" value="Radical SAM enzymes"/>
    <property type="match status" value="1"/>
</dbReference>
<dbReference type="PROSITE" id="PS51918">
    <property type="entry name" value="RADICAL_SAM"/>
    <property type="match status" value="1"/>
</dbReference>
<feature type="chain" id="PRO_0000381258" description="Biotin synthase">
    <location>
        <begin position="1"/>
        <end position="339"/>
    </location>
</feature>
<feature type="domain" description="Radical SAM core" evidence="2">
    <location>
        <begin position="55"/>
        <end position="282"/>
    </location>
</feature>
<feature type="binding site" evidence="1">
    <location>
        <position position="70"/>
    </location>
    <ligand>
        <name>[4Fe-4S] cluster</name>
        <dbReference type="ChEBI" id="CHEBI:49883"/>
        <note>4Fe-4S-S-AdoMet</note>
    </ligand>
</feature>
<feature type="binding site" evidence="1">
    <location>
        <position position="74"/>
    </location>
    <ligand>
        <name>[4Fe-4S] cluster</name>
        <dbReference type="ChEBI" id="CHEBI:49883"/>
        <note>4Fe-4S-S-AdoMet</note>
    </ligand>
</feature>
<feature type="binding site" evidence="1">
    <location>
        <position position="77"/>
    </location>
    <ligand>
        <name>[4Fe-4S] cluster</name>
        <dbReference type="ChEBI" id="CHEBI:49883"/>
        <note>4Fe-4S-S-AdoMet</note>
    </ligand>
</feature>
<feature type="binding site" evidence="1">
    <location>
        <position position="114"/>
    </location>
    <ligand>
        <name>[2Fe-2S] cluster</name>
        <dbReference type="ChEBI" id="CHEBI:190135"/>
    </ligand>
</feature>
<feature type="binding site" evidence="1">
    <location>
        <position position="145"/>
    </location>
    <ligand>
        <name>[2Fe-2S] cluster</name>
        <dbReference type="ChEBI" id="CHEBI:190135"/>
    </ligand>
</feature>
<feature type="binding site" evidence="1">
    <location>
        <position position="205"/>
    </location>
    <ligand>
        <name>[2Fe-2S] cluster</name>
        <dbReference type="ChEBI" id="CHEBI:190135"/>
    </ligand>
</feature>
<feature type="binding site" evidence="1">
    <location>
        <position position="277"/>
    </location>
    <ligand>
        <name>[2Fe-2S] cluster</name>
        <dbReference type="ChEBI" id="CHEBI:190135"/>
    </ligand>
</feature>
<proteinExistence type="inferred from homology"/>
<name>BIOB_BURA4</name>
<gene>
    <name evidence="1" type="primary">bioB</name>
    <name type="ordered locus">BamMC406_2846</name>
</gene>